<gene>
    <name evidence="1" type="primary">kdsB</name>
    <name type="ordered locus">BSUIS_A0041</name>
</gene>
<name>KDSB_BRUSI</name>
<dbReference type="EC" id="2.7.7.38" evidence="1"/>
<dbReference type="EMBL" id="CP000911">
    <property type="protein sequence ID" value="ABY37148.1"/>
    <property type="molecule type" value="Genomic_DNA"/>
</dbReference>
<dbReference type="RefSeq" id="WP_002971781.1">
    <property type="nucleotide sequence ID" value="NC_010169.1"/>
</dbReference>
<dbReference type="SMR" id="B0CI58"/>
<dbReference type="KEGG" id="bmt:BSUIS_A0041"/>
<dbReference type="HOGENOM" id="CLU_065038_0_1_5"/>
<dbReference type="UniPathway" id="UPA00030"/>
<dbReference type="UniPathway" id="UPA00358">
    <property type="reaction ID" value="UER00476"/>
</dbReference>
<dbReference type="Proteomes" id="UP000008545">
    <property type="component" value="Chromosome I"/>
</dbReference>
<dbReference type="GO" id="GO:0005829">
    <property type="term" value="C:cytosol"/>
    <property type="evidence" value="ECO:0007669"/>
    <property type="project" value="TreeGrafter"/>
</dbReference>
<dbReference type="GO" id="GO:0008690">
    <property type="term" value="F:3-deoxy-manno-octulosonate cytidylyltransferase activity"/>
    <property type="evidence" value="ECO:0007669"/>
    <property type="project" value="UniProtKB-UniRule"/>
</dbReference>
<dbReference type="GO" id="GO:0033468">
    <property type="term" value="P:CMP-keto-3-deoxy-D-manno-octulosonic acid biosynthetic process"/>
    <property type="evidence" value="ECO:0007669"/>
    <property type="project" value="UniProtKB-UniRule"/>
</dbReference>
<dbReference type="GO" id="GO:0009103">
    <property type="term" value="P:lipopolysaccharide biosynthetic process"/>
    <property type="evidence" value="ECO:0007669"/>
    <property type="project" value="UniProtKB-UniRule"/>
</dbReference>
<dbReference type="CDD" id="cd02517">
    <property type="entry name" value="CMP-KDO-Synthetase"/>
    <property type="match status" value="1"/>
</dbReference>
<dbReference type="Gene3D" id="3.90.550.10">
    <property type="entry name" value="Spore Coat Polysaccharide Biosynthesis Protein SpsA, Chain A"/>
    <property type="match status" value="1"/>
</dbReference>
<dbReference type="HAMAP" id="MF_00057">
    <property type="entry name" value="KdsB"/>
    <property type="match status" value="1"/>
</dbReference>
<dbReference type="InterPro" id="IPR003329">
    <property type="entry name" value="Cytidylyl_trans"/>
</dbReference>
<dbReference type="InterPro" id="IPR004528">
    <property type="entry name" value="KdsB"/>
</dbReference>
<dbReference type="InterPro" id="IPR029044">
    <property type="entry name" value="Nucleotide-diphossugar_trans"/>
</dbReference>
<dbReference type="NCBIfam" id="TIGR00466">
    <property type="entry name" value="kdsB"/>
    <property type="match status" value="1"/>
</dbReference>
<dbReference type="NCBIfam" id="NF003948">
    <property type="entry name" value="PRK05450.1-1"/>
    <property type="match status" value="1"/>
</dbReference>
<dbReference type="NCBIfam" id="NF003952">
    <property type="entry name" value="PRK05450.1-5"/>
    <property type="match status" value="1"/>
</dbReference>
<dbReference type="PANTHER" id="PTHR42866">
    <property type="entry name" value="3-DEOXY-MANNO-OCTULOSONATE CYTIDYLYLTRANSFERASE"/>
    <property type="match status" value="1"/>
</dbReference>
<dbReference type="PANTHER" id="PTHR42866:SF2">
    <property type="entry name" value="3-DEOXY-MANNO-OCTULOSONATE CYTIDYLYLTRANSFERASE, MITOCHONDRIAL"/>
    <property type="match status" value="1"/>
</dbReference>
<dbReference type="Pfam" id="PF02348">
    <property type="entry name" value="CTP_transf_3"/>
    <property type="match status" value="1"/>
</dbReference>
<dbReference type="SUPFAM" id="SSF53448">
    <property type="entry name" value="Nucleotide-diphospho-sugar transferases"/>
    <property type="match status" value="1"/>
</dbReference>
<sequence>MLQTMKTLTLIPARLGSTRLPNKPLADICGKPMIVHVADRAAAAKLGRTVIATDSEEIFKVVAAHGHEAIMTRGDHESGSDRIYEALAKLDPSGEIDAVVNVQGDLPTIDPDTIRRALLPLEDGPADIATLGVEITVEEEKTNPNVVKIVGSPLAGNRRLRALYFTRATAPYGEGPLYHHIGLYAYRRSALERFVKLGPSPLEKREKLEQLRALEAGMRIDVEIVKTVPLGVDTQADLDRARTFCSQAGTI</sequence>
<accession>B0CI58</accession>
<evidence type="ECO:0000255" key="1">
    <source>
        <dbReference type="HAMAP-Rule" id="MF_00057"/>
    </source>
</evidence>
<reference key="1">
    <citation type="submission" date="2007-12" db="EMBL/GenBank/DDBJ databases">
        <title>Brucella suis ATCC 23445 whole genome shotgun sequencing project.</title>
        <authorList>
            <person name="Setubal J.C."/>
            <person name="Bowns C."/>
            <person name="Boyle S."/>
            <person name="Crasta O.R."/>
            <person name="Czar M.J."/>
            <person name="Dharmanolla C."/>
            <person name="Gillespie J.J."/>
            <person name="Kenyon R.W."/>
            <person name="Lu J."/>
            <person name="Mane S."/>
            <person name="Mohapatra S."/>
            <person name="Nagrani S."/>
            <person name="Purkayastha A."/>
            <person name="Rajasimha H.K."/>
            <person name="Shallom J.M."/>
            <person name="Shallom S."/>
            <person name="Shukla M."/>
            <person name="Snyder E.E."/>
            <person name="Sobral B.W."/>
            <person name="Wattam A.R."/>
            <person name="Will R."/>
            <person name="Williams K."/>
            <person name="Yoo H."/>
            <person name="Bruce D."/>
            <person name="Detter C."/>
            <person name="Munk C."/>
            <person name="Brettin T.S."/>
        </authorList>
    </citation>
    <scope>NUCLEOTIDE SEQUENCE [LARGE SCALE GENOMIC DNA]</scope>
    <source>
        <strain>ATCC 23445 / NCTC 10510</strain>
    </source>
</reference>
<protein>
    <recommendedName>
        <fullName evidence="1">3-deoxy-manno-octulosonate cytidylyltransferase</fullName>
        <ecNumber evidence="1">2.7.7.38</ecNumber>
    </recommendedName>
    <alternativeName>
        <fullName evidence="1">CMP-2-keto-3-deoxyoctulosonic acid synthase</fullName>
        <shortName evidence="1">CKS</shortName>
        <shortName evidence="1">CMP-KDO synthase</shortName>
    </alternativeName>
</protein>
<proteinExistence type="inferred from homology"/>
<keyword id="KW-0963">Cytoplasm</keyword>
<keyword id="KW-0448">Lipopolysaccharide biosynthesis</keyword>
<keyword id="KW-0548">Nucleotidyltransferase</keyword>
<keyword id="KW-0808">Transferase</keyword>
<comment type="function">
    <text evidence="1">Activates KDO (a required 8-carbon sugar) for incorporation into bacterial lipopolysaccharide in Gram-negative bacteria.</text>
</comment>
<comment type="catalytic activity">
    <reaction evidence="1">
        <text>3-deoxy-alpha-D-manno-oct-2-ulosonate + CTP = CMP-3-deoxy-beta-D-manno-octulosonate + diphosphate</text>
        <dbReference type="Rhea" id="RHEA:23448"/>
        <dbReference type="ChEBI" id="CHEBI:33019"/>
        <dbReference type="ChEBI" id="CHEBI:37563"/>
        <dbReference type="ChEBI" id="CHEBI:85986"/>
        <dbReference type="ChEBI" id="CHEBI:85987"/>
        <dbReference type="EC" id="2.7.7.38"/>
    </reaction>
</comment>
<comment type="pathway">
    <text evidence="1">Nucleotide-sugar biosynthesis; CMP-3-deoxy-D-manno-octulosonate biosynthesis; CMP-3-deoxy-D-manno-octulosonate from 3-deoxy-D-manno-octulosonate and CTP: step 1/1.</text>
</comment>
<comment type="pathway">
    <text evidence="1">Bacterial outer membrane biogenesis; lipopolysaccharide biosynthesis.</text>
</comment>
<comment type="subcellular location">
    <subcellularLocation>
        <location evidence="1">Cytoplasm</location>
    </subcellularLocation>
</comment>
<comment type="similarity">
    <text evidence="1">Belongs to the KdsB family.</text>
</comment>
<feature type="chain" id="PRO_0000370018" description="3-deoxy-manno-octulosonate cytidylyltransferase">
    <location>
        <begin position="1"/>
        <end position="251"/>
    </location>
</feature>
<organism>
    <name type="scientific">Brucella suis (strain ATCC 23445 / NCTC 10510)</name>
    <dbReference type="NCBI Taxonomy" id="470137"/>
    <lineage>
        <taxon>Bacteria</taxon>
        <taxon>Pseudomonadati</taxon>
        <taxon>Pseudomonadota</taxon>
        <taxon>Alphaproteobacteria</taxon>
        <taxon>Hyphomicrobiales</taxon>
        <taxon>Brucellaceae</taxon>
        <taxon>Brucella/Ochrobactrum group</taxon>
        <taxon>Brucella</taxon>
    </lineage>
</organism>